<sequence length="154" mass="17020">MNLVVLNGRLTRDPELKFGQSGKAYSRFSIAVDRPFQSSSDKNSQTADFINCVAFGKTAEFIGEYFRKGRKILLNGRLQMSQYESEGKKITTYVVIADSVEFGEAKTSSGTTETSSYGRSESKSTNNTIETPGFDENSSDDMGAPTEIDDEFPF</sequence>
<keyword id="KW-0238">DNA-binding</keyword>
<keyword id="KW-1185">Reference proteome</keyword>
<dbReference type="EMBL" id="AE009951">
    <property type="protein sequence ID" value="AAL95500.1"/>
    <property type="molecule type" value="Genomic_DNA"/>
</dbReference>
<dbReference type="RefSeq" id="NP_604201.1">
    <property type="nucleotide sequence ID" value="NC_003454.1"/>
</dbReference>
<dbReference type="RefSeq" id="WP_005902513.1">
    <property type="nucleotide sequence ID" value="NZ_OZ209243.1"/>
</dbReference>
<dbReference type="SMR" id="Q8RE26"/>
<dbReference type="FunCoup" id="Q8RE26">
    <property type="interactions" value="386"/>
</dbReference>
<dbReference type="STRING" id="190304.FN1304"/>
<dbReference type="PaxDb" id="190304-FN1304"/>
<dbReference type="EnsemblBacteria" id="AAL95500">
    <property type="protein sequence ID" value="AAL95500"/>
    <property type="gene ID" value="FN1304"/>
</dbReference>
<dbReference type="KEGG" id="fnu:FN1304"/>
<dbReference type="PATRIC" id="fig|190304.8.peg.1869"/>
<dbReference type="eggNOG" id="COG0629">
    <property type="taxonomic scope" value="Bacteria"/>
</dbReference>
<dbReference type="HOGENOM" id="CLU_078758_6_2_0"/>
<dbReference type="InParanoid" id="Q8RE26"/>
<dbReference type="BioCyc" id="FNUC190304:G1FZS-1879-MONOMER"/>
<dbReference type="Proteomes" id="UP000002521">
    <property type="component" value="Chromosome"/>
</dbReference>
<dbReference type="GO" id="GO:0009295">
    <property type="term" value="C:nucleoid"/>
    <property type="evidence" value="ECO:0000318"/>
    <property type="project" value="GO_Central"/>
</dbReference>
<dbReference type="GO" id="GO:0008047">
    <property type="term" value="F:enzyme activator activity"/>
    <property type="evidence" value="ECO:0000318"/>
    <property type="project" value="GO_Central"/>
</dbReference>
<dbReference type="GO" id="GO:0003697">
    <property type="term" value="F:single-stranded DNA binding"/>
    <property type="evidence" value="ECO:0000318"/>
    <property type="project" value="GO_Central"/>
</dbReference>
<dbReference type="GO" id="GO:0006260">
    <property type="term" value="P:DNA replication"/>
    <property type="evidence" value="ECO:0000318"/>
    <property type="project" value="GO_Central"/>
</dbReference>
<dbReference type="CDD" id="cd04496">
    <property type="entry name" value="SSB_OBF"/>
    <property type="match status" value="1"/>
</dbReference>
<dbReference type="FunFam" id="2.40.50.140:FF:000650">
    <property type="entry name" value="Single-stranded DNA-binding protein"/>
    <property type="match status" value="1"/>
</dbReference>
<dbReference type="Gene3D" id="2.40.50.140">
    <property type="entry name" value="Nucleic acid-binding proteins"/>
    <property type="match status" value="1"/>
</dbReference>
<dbReference type="HAMAP" id="MF_00984">
    <property type="entry name" value="SSB"/>
    <property type="match status" value="1"/>
</dbReference>
<dbReference type="InterPro" id="IPR012340">
    <property type="entry name" value="NA-bd_OB-fold"/>
</dbReference>
<dbReference type="InterPro" id="IPR000424">
    <property type="entry name" value="Primosome_PriB/ssb"/>
</dbReference>
<dbReference type="InterPro" id="IPR011344">
    <property type="entry name" value="ssDNA-bd"/>
</dbReference>
<dbReference type="NCBIfam" id="TIGR00621">
    <property type="entry name" value="ssb"/>
    <property type="match status" value="1"/>
</dbReference>
<dbReference type="PANTHER" id="PTHR10302">
    <property type="entry name" value="SINGLE-STRANDED DNA-BINDING PROTEIN"/>
    <property type="match status" value="1"/>
</dbReference>
<dbReference type="PANTHER" id="PTHR10302:SF27">
    <property type="entry name" value="SINGLE-STRANDED DNA-BINDING PROTEIN"/>
    <property type="match status" value="1"/>
</dbReference>
<dbReference type="Pfam" id="PF00436">
    <property type="entry name" value="SSB"/>
    <property type="match status" value="1"/>
</dbReference>
<dbReference type="PIRSF" id="PIRSF002070">
    <property type="entry name" value="SSB"/>
    <property type="match status" value="1"/>
</dbReference>
<dbReference type="SUPFAM" id="SSF50249">
    <property type="entry name" value="Nucleic acid-binding proteins"/>
    <property type="match status" value="1"/>
</dbReference>
<dbReference type="PROSITE" id="PS50935">
    <property type="entry name" value="SSB"/>
    <property type="match status" value="1"/>
</dbReference>
<protein>
    <recommendedName>
        <fullName evidence="1">Single-stranded DNA-binding protein</fullName>
        <shortName evidence="1">SSB</shortName>
    </recommendedName>
</protein>
<comment type="subunit">
    <text evidence="1">Homotetramer.</text>
</comment>
<gene>
    <name type="primary">ssb</name>
    <name type="ordered locus">FN1304</name>
</gene>
<feature type="chain" id="PRO_0000096046" description="Single-stranded DNA-binding protein">
    <location>
        <begin position="1"/>
        <end position="154"/>
    </location>
</feature>
<feature type="domain" description="SSB" evidence="1">
    <location>
        <begin position="1"/>
        <end position="104"/>
    </location>
</feature>
<feature type="region of interest" description="Disordered" evidence="2">
    <location>
        <begin position="105"/>
        <end position="154"/>
    </location>
</feature>
<feature type="compositionally biased region" description="Low complexity" evidence="2">
    <location>
        <begin position="107"/>
        <end position="119"/>
    </location>
</feature>
<name>SSB_FUSNN</name>
<proteinExistence type="inferred from homology"/>
<organism>
    <name type="scientific">Fusobacterium nucleatum subsp. nucleatum (strain ATCC 25586 / DSM 15643 / BCRC 10681 / CIP 101130 / JCM 8532 / KCTC 2640 / LMG 13131 / VPI 4355)</name>
    <dbReference type="NCBI Taxonomy" id="190304"/>
    <lineage>
        <taxon>Bacteria</taxon>
        <taxon>Fusobacteriati</taxon>
        <taxon>Fusobacteriota</taxon>
        <taxon>Fusobacteriia</taxon>
        <taxon>Fusobacteriales</taxon>
        <taxon>Fusobacteriaceae</taxon>
        <taxon>Fusobacterium</taxon>
    </lineage>
</organism>
<accession>Q8RE26</accession>
<evidence type="ECO:0000255" key="1">
    <source>
        <dbReference type="HAMAP-Rule" id="MF_00984"/>
    </source>
</evidence>
<evidence type="ECO:0000256" key="2">
    <source>
        <dbReference type="SAM" id="MobiDB-lite"/>
    </source>
</evidence>
<reference key="1">
    <citation type="journal article" date="2002" name="J. Bacteriol.">
        <title>Genome sequence and analysis of the oral bacterium Fusobacterium nucleatum strain ATCC 25586.</title>
        <authorList>
            <person name="Kapatral V."/>
            <person name="Anderson I."/>
            <person name="Ivanova N."/>
            <person name="Reznik G."/>
            <person name="Los T."/>
            <person name="Lykidis A."/>
            <person name="Bhattacharyya A."/>
            <person name="Bartman A."/>
            <person name="Gardner W."/>
            <person name="Grechkin G."/>
            <person name="Zhu L."/>
            <person name="Vasieva O."/>
            <person name="Chu L."/>
            <person name="Kogan Y."/>
            <person name="Chaga O."/>
            <person name="Goltsman E."/>
            <person name="Bernal A."/>
            <person name="Larsen N."/>
            <person name="D'Souza M."/>
            <person name="Walunas T."/>
            <person name="Pusch G."/>
            <person name="Haselkorn R."/>
            <person name="Fonstein M."/>
            <person name="Kyrpides N.C."/>
            <person name="Overbeek R."/>
        </authorList>
    </citation>
    <scope>NUCLEOTIDE SEQUENCE [LARGE SCALE GENOMIC DNA]</scope>
    <source>
        <strain>ATCC 25586 / DSM 15643 / BCRC 10681 / CIP 101130 / JCM 8532 / KCTC 2640 / LMG 13131 / VPI 4355</strain>
    </source>
</reference>